<organism>
    <name type="scientific">Thermosipho africanus (strain TCF52B)</name>
    <dbReference type="NCBI Taxonomy" id="484019"/>
    <lineage>
        <taxon>Bacteria</taxon>
        <taxon>Thermotogati</taxon>
        <taxon>Thermotogota</taxon>
        <taxon>Thermotogae</taxon>
        <taxon>Thermotogales</taxon>
        <taxon>Fervidobacteriaceae</taxon>
        <taxon>Thermosipho</taxon>
    </lineage>
</organism>
<name>RS3_THEAB</name>
<feature type="chain" id="PRO_1000141026" description="Small ribosomal subunit protein uS3">
    <location>
        <begin position="1"/>
        <end position="209"/>
    </location>
</feature>
<feature type="domain" description="KH type-2" evidence="1">
    <location>
        <begin position="38"/>
        <end position="107"/>
    </location>
</feature>
<dbReference type="EMBL" id="CP001185">
    <property type="protein sequence ID" value="ACJ75666.1"/>
    <property type="molecule type" value="Genomic_DNA"/>
</dbReference>
<dbReference type="RefSeq" id="WP_004101447.1">
    <property type="nucleotide sequence ID" value="NC_011653.1"/>
</dbReference>
<dbReference type="SMR" id="B7IHV2"/>
<dbReference type="STRING" id="484019.THA_1221"/>
<dbReference type="KEGG" id="taf:THA_1221"/>
<dbReference type="eggNOG" id="COG0092">
    <property type="taxonomic scope" value="Bacteria"/>
</dbReference>
<dbReference type="HOGENOM" id="CLU_058591_0_2_0"/>
<dbReference type="OrthoDB" id="9806396at2"/>
<dbReference type="Proteomes" id="UP000002453">
    <property type="component" value="Chromosome"/>
</dbReference>
<dbReference type="GO" id="GO:0022627">
    <property type="term" value="C:cytosolic small ribosomal subunit"/>
    <property type="evidence" value="ECO:0007669"/>
    <property type="project" value="TreeGrafter"/>
</dbReference>
<dbReference type="GO" id="GO:0003729">
    <property type="term" value="F:mRNA binding"/>
    <property type="evidence" value="ECO:0007669"/>
    <property type="project" value="UniProtKB-UniRule"/>
</dbReference>
<dbReference type="GO" id="GO:0019843">
    <property type="term" value="F:rRNA binding"/>
    <property type="evidence" value="ECO:0007669"/>
    <property type="project" value="UniProtKB-UniRule"/>
</dbReference>
<dbReference type="GO" id="GO:0003735">
    <property type="term" value="F:structural constituent of ribosome"/>
    <property type="evidence" value="ECO:0007669"/>
    <property type="project" value="InterPro"/>
</dbReference>
<dbReference type="GO" id="GO:0006412">
    <property type="term" value="P:translation"/>
    <property type="evidence" value="ECO:0007669"/>
    <property type="project" value="UniProtKB-UniRule"/>
</dbReference>
<dbReference type="CDD" id="cd02412">
    <property type="entry name" value="KH-II_30S_S3"/>
    <property type="match status" value="1"/>
</dbReference>
<dbReference type="FunFam" id="3.30.300.20:FF:000001">
    <property type="entry name" value="30S ribosomal protein S3"/>
    <property type="match status" value="1"/>
</dbReference>
<dbReference type="Gene3D" id="3.30.300.20">
    <property type="match status" value="1"/>
</dbReference>
<dbReference type="Gene3D" id="3.30.1140.32">
    <property type="entry name" value="Ribosomal protein S3, C-terminal domain"/>
    <property type="match status" value="1"/>
</dbReference>
<dbReference type="HAMAP" id="MF_01309_B">
    <property type="entry name" value="Ribosomal_uS3_B"/>
    <property type="match status" value="1"/>
</dbReference>
<dbReference type="InterPro" id="IPR004087">
    <property type="entry name" value="KH_dom"/>
</dbReference>
<dbReference type="InterPro" id="IPR015946">
    <property type="entry name" value="KH_dom-like_a/b"/>
</dbReference>
<dbReference type="InterPro" id="IPR004044">
    <property type="entry name" value="KH_dom_type_2"/>
</dbReference>
<dbReference type="InterPro" id="IPR009019">
    <property type="entry name" value="KH_sf_prok-type"/>
</dbReference>
<dbReference type="InterPro" id="IPR036419">
    <property type="entry name" value="Ribosomal_S3_C_sf"/>
</dbReference>
<dbReference type="InterPro" id="IPR005704">
    <property type="entry name" value="Ribosomal_uS3_bac-typ"/>
</dbReference>
<dbReference type="InterPro" id="IPR001351">
    <property type="entry name" value="Ribosomal_uS3_C"/>
</dbReference>
<dbReference type="InterPro" id="IPR018280">
    <property type="entry name" value="Ribosomal_uS3_CS"/>
</dbReference>
<dbReference type="NCBIfam" id="TIGR01009">
    <property type="entry name" value="rpsC_bact"/>
    <property type="match status" value="1"/>
</dbReference>
<dbReference type="PANTHER" id="PTHR11760">
    <property type="entry name" value="30S/40S RIBOSOMAL PROTEIN S3"/>
    <property type="match status" value="1"/>
</dbReference>
<dbReference type="PANTHER" id="PTHR11760:SF19">
    <property type="entry name" value="SMALL RIBOSOMAL SUBUNIT PROTEIN US3C"/>
    <property type="match status" value="1"/>
</dbReference>
<dbReference type="Pfam" id="PF07650">
    <property type="entry name" value="KH_2"/>
    <property type="match status" value="1"/>
</dbReference>
<dbReference type="Pfam" id="PF00189">
    <property type="entry name" value="Ribosomal_S3_C"/>
    <property type="match status" value="1"/>
</dbReference>
<dbReference type="SMART" id="SM00322">
    <property type="entry name" value="KH"/>
    <property type="match status" value="1"/>
</dbReference>
<dbReference type="SUPFAM" id="SSF54814">
    <property type="entry name" value="Prokaryotic type KH domain (KH-domain type II)"/>
    <property type="match status" value="1"/>
</dbReference>
<dbReference type="SUPFAM" id="SSF54821">
    <property type="entry name" value="Ribosomal protein S3 C-terminal domain"/>
    <property type="match status" value="1"/>
</dbReference>
<dbReference type="PROSITE" id="PS50823">
    <property type="entry name" value="KH_TYPE_2"/>
    <property type="match status" value="1"/>
</dbReference>
<dbReference type="PROSITE" id="PS00548">
    <property type="entry name" value="RIBOSOMAL_S3"/>
    <property type="match status" value="1"/>
</dbReference>
<accession>B7IHV2</accession>
<proteinExistence type="inferred from homology"/>
<comment type="function">
    <text evidence="1">Binds the lower part of the 30S subunit head. Binds mRNA in the 70S ribosome, positioning it for translation.</text>
</comment>
<comment type="subunit">
    <text evidence="1">Part of the 30S ribosomal subunit. Forms a tight complex with proteins S10 and S14.</text>
</comment>
<comment type="similarity">
    <text evidence="1">Belongs to the universal ribosomal protein uS3 family.</text>
</comment>
<sequence>MGQKVHPRGFRLGITADWQATWFNEKNYKEYLLEDEEIRKVIKNKYAQAGISEIVIERPDSERVIAIIKSARPGIIIGKKGAEITELRQELEKRFNRRFIVNVEEIKNPEVDAQLVAENIASRIEKRASYKVVMKKAIFNAMKKGAKGIKIMVSGRLAGAEIARTEWYLKGRLPLQTIKSIIDYGTARAETKYGTIGIKVWIYKGDADI</sequence>
<protein>
    <recommendedName>
        <fullName evidence="1">Small ribosomal subunit protein uS3</fullName>
    </recommendedName>
    <alternativeName>
        <fullName evidence="2">30S ribosomal protein S3</fullName>
    </alternativeName>
</protein>
<reference key="1">
    <citation type="journal article" date="2009" name="J. Bacteriol.">
        <title>The genome of Thermosipho africanus TCF52B: lateral genetic connections to the Firmicutes and Archaea.</title>
        <authorList>
            <person name="Nesboe C.L."/>
            <person name="Bapteste E."/>
            <person name="Curtis B."/>
            <person name="Dahle H."/>
            <person name="Lopez P."/>
            <person name="Macleod D."/>
            <person name="Dlutek M."/>
            <person name="Bowman S."/>
            <person name="Zhaxybayeva O."/>
            <person name="Birkeland N.-K."/>
            <person name="Doolittle W.F."/>
        </authorList>
    </citation>
    <scope>NUCLEOTIDE SEQUENCE [LARGE SCALE GENOMIC DNA]</scope>
    <source>
        <strain>TCF52B</strain>
    </source>
</reference>
<keyword id="KW-1185">Reference proteome</keyword>
<keyword id="KW-0687">Ribonucleoprotein</keyword>
<keyword id="KW-0689">Ribosomal protein</keyword>
<keyword id="KW-0694">RNA-binding</keyword>
<keyword id="KW-0699">rRNA-binding</keyword>
<gene>
    <name evidence="1" type="primary">rpsC</name>
    <name type="ordered locus">THA_1221</name>
</gene>
<evidence type="ECO:0000255" key="1">
    <source>
        <dbReference type="HAMAP-Rule" id="MF_01309"/>
    </source>
</evidence>
<evidence type="ECO:0000305" key="2"/>